<protein>
    <recommendedName>
        <fullName evidence="1">Ribosomal RNA small subunit methyltransferase I</fullName>
        <ecNumber evidence="1">2.1.1.198</ecNumber>
    </recommendedName>
    <alternativeName>
        <fullName evidence="1">16S rRNA 2'-O-ribose C1402 methyltransferase</fullName>
    </alternativeName>
    <alternativeName>
        <fullName evidence="1">rRNA (cytidine-2'-O-)-methyltransferase RsmI</fullName>
    </alternativeName>
</protein>
<dbReference type="EC" id="2.1.1.198" evidence="1"/>
<dbReference type="EMBL" id="D13171">
    <property type="protein sequence ID" value="BAA02452.1"/>
    <property type="molecule type" value="Genomic_DNA"/>
</dbReference>
<dbReference type="PIR" id="PN0543">
    <property type="entry name" value="PN0543"/>
</dbReference>
<dbReference type="SMR" id="Q08329"/>
<dbReference type="GO" id="GO:0005737">
    <property type="term" value="C:cytoplasm"/>
    <property type="evidence" value="ECO:0007669"/>
    <property type="project" value="UniProtKB-SubCell"/>
</dbReference>
<dbReference type="GO" id="GO:0008168">
    <property type="term" value="F:methyltransferase activity"/>
    <property type="evidence" value="ECO:0007669"/>
    <property type="project" value="UniProtKB-KW"/>
</dbReference>
<dbReference type="GO" id="GO:0032259">
    <property type="term" value="P:methylation"/>
    <property type="evidence" value="ECO:0007669"/>
    <property type="project" value="UniProtKB-KW"/>
</dbReference>
<dbReference type="GO" id="GO:0006364">
    <property type="term" value="P:rRNA processing"/>
    <property type="evidence" value="ECO:0007669"/>
    <property type="project" value="UniProtKB-KW"/>
</dbReference>
<dbReference type="CDD" id="cd11648">
    <property type="entry name" value="RsmI"/>
    <property type="match status" value="1"/>
</dbReference>
<dbReference type="FunFam" id="3.30.950.10:FF:000002">
    <property type="entry name" value="Ribosomal RNA small subunit methyltransferase I"/>
    <property type="match status" value="1"/>
</dbReference>
<dbReference type="FunFam" id="3.40.1010.10:FF:000007">
    <property type="entry name" value="Ribosomal RNA small subunit methyltransferase I"/>
    <property type="match status" value="1"/>
</dbReference>
<dbReference type="Gene3D" id="3.40.1010.10">
    <property type="entry name" value="Cobalt-precorrin-4 Transmethylase, Domain 1"/>
    <property type="match status" value="1"/>
</dbReference>
<dbReference type="Gene3D" id="3.30.950.10">
    <property type="entry name" value="Methyltransferase, Cobalt-precorrin-4 Transmethylase, Domain 2"/>
    <property type="match status" value="1"/>
</dbReference>
<dbReference type="HAMAP" id="MF_01877">
    <property type="entry name" value="16SrRNA_methyltr_I"/>
    <property type="match status" value="1"/>
</dbReference>
<dbReference type="InterPro" id="IPR000878">
    <property type="entry name" value="4pyrrol_Mease"/>
</dbReference>
<dbReference type="InterPro" id="IPR035996">
    <property type="entry name" value="4pyrrol_Methylase_sf"/>
</dbReference>
<dbReference type="InterPro" id="IPR014777">
    <property type="entry name" value="4pyrrole_Mease_sub1"/>
</dbReference>
<dbReference type="InterPro" id="IPR014776">
    <property type="entry name" value="4pyrrole_Mease_sub2"/>
</dbReference>
<dbReference type="InterPro" id="IPR008189">
    <property type="entry name" value="rRNA_ssu_MeTfrase_I"/>
</dbReference>
<dbReference type="InterPro" id="IPR018063">
    <property type="entry name" value="SAM_MeTrfase_RsmI_CS"/>
</dbReference>
<dbReference type="NCBIfam" id="TIGR00096">
    <property type="entry name" value="16S rRNA (cytidine(1402)-2'-O)-methyltransferase"/>
    <property type="match status" value="1"/>
</dbReference>
<dbReference type="PANTHER" id="PTHR46111">
    <property type="entry name" value="RIBOSOMAL RNA SMALL SUBUNIT METHYLTRANSFERASE I"/>
    <property type="match status" value="1"/>
</dbReference>
<dbReference type="PANTHER" id="PTHR46111:SF1">
    <property type="entry name" value="RIBOSOMAL RNA SMALL SUBUNIT METHYLTRANSFERASE I"/>
    <property type="match status" value="1"/>
</dbReference>
<dbReference type="Pfam" id="PF00590">
    <property type="entry name" value="TP_methylase"/>
    <property type="match status" value="1"/>
</dbReference>
<dbReference type="PIRSF" id="PIRSF005917">
    <property type="entry name" value="MTase_YraL"/>
    <property type="match status" value="1"/>
</dbReference>
<dbReference type="SUPFAM" id="SSF53790">
    <property type="entry name" value="Tetrapyrrole methylase"/>
    <property type="match status" value="1"/>
</dbReference>
<dbReference type="PROSITE" id="PS01296">
    <property type="entry name" value="RSMI"/>
    <property type="match status" value="1"/>
</dbReference>
<keyword id="KW-0963">Cytoplasm</keyword>
<keyword id="KW-0489">Methyltransferase</keyword>
<keyword id="KW-0698">rRNA processing</keyword>
<keyword id="KW-0949">S-adenosyl-L-methionine</keyword>
<keyword id="KW-0808">Transferase</keyword>
<proteinExistence type="inferred from homology"/>
<gene>
    <name evidence="1" type="primary">rsmI</name>
</gene>
<reference key="1">
    <citation type="journal article" date="1993" name="Gene">
        <title>Analysis of the self-defense gene (fmrO) of a fortimicin A (astromicin) producer, Micromonospora olivasterospora: comparison with other aminoglycoside-resistance-encoding genes.</title>
        <authorList>
            <person name="Ohta T."/>
            <person name="Hasegawa M."/>
        </authorList>
    </citation>
    <scope>NUCLEOTIDE SEQUENCE [GENOMIC DNA]</scope>
</reference>
<evidence type="ECO:0000255" key="1">
    <source>
        <dbReference type="HAMAP-Rule" id="MF_01877"/>
    </source>
</evidence>
<evidence type="ECO:0000256" key="2">
    <source>
        <dbReference type="SAM" id="MobiDB-lite"/>
    </source>
</evidence>
<accession>Q08329</accession>
<sequence>MASIQLARTTRGGDGVARADGTRQADEAGSGTLYLVPTPIGNPGDITLRAIEVLRRVGVVASEDTRHTYRLFQSLEIDARLVSYHDHNEESRSRQLLGLLREGTDVALVSDAGTPLVNDPGYRLVAAAVEADVPVRPLPGATASVTALIGSGMPNHQFHYVGFLPRKEAARRAALTALRSTPATLIFFEAPHRIVAMLADLAAVLGDRPAALARNLTKDDEEFLRGRLNELTARLRVEQVVRGQFTVVVAGSPEAHADEDRALAARLTETLVRHGAEARLIREVVREVTGLPRNWVYEQVRLATERSGPLGNS</sequence>
<name>RSMI_MICOL</name>
<organism>
    <name type="scientific">Micromonospora olivasterospora</name>
    <dbReference type="NCBI Taxonomy" id="1880"/>
    <lineage>
        <taxon>Bacteria</taxon>
        <taxon>Bacillati</taxon>
        <taxon>Actinomycetota</taxon>
        <taxon>Actinomycetes</taxon>
        <taxon>Micromonosporales</taxon>
        <taxon>Micromonosporaceae</taxon>
        <taxon>Micromonospora</taxon>
    </lineage>
</organism>
<feature type="chain" id="PRO_0000211964" description="Ribosomal RNA small subunit methyltransferase I">
    <location>
        <begin position="1"/>
        <end position="313" status="greater than"/>
    </location>
</feature>
<feature type="region of interest" description="Disordered" evidence="2">
    <location>
        <begin position="1"/>
        <end position="23"/>
    </location>
</feature>
<feature type="non-terminal residue">
    <location>
        <position position="313"/>
    </location>
</feature>
<comment type="function">
    <text evidence="1">Catalyzes the 2'-O-methylation of the ribose of cytidine 1402 (C1402) in 16S rRNA.</text>
</comment>
<comment type="catalytic activity">
    <reaction evidence="1">
        <text>cytidine(1402) in 16S rRNA + S-adenosyl-L-methionine = 2'-O-methylcytidine(1402) in 16S rRNA + S-adenosyl-L-homocysteine + H(+)</text>
        <dbReference type="Rhea" id="RHEA:42924"/>
        <dbReference type="Rhea" id="RHEA-COMP:10285"/>
        <dbReference type="Rhea" id="RHEA-COMP:10286"/>
        <dbReference type="ChEBI" id="CHEBI:15378"/>
        <dbReference type="ChEBI" id="CHEBI:57856"/>
        <dbReference type="ChEBI" id="CHEBI:59789"/>
        <dbReference type="ChEBI" id="CHEBI:74495"/>
        <dbReference type="ChEBI" id="CHEBI:82748"/>
        <dbReference type="EC" id="2.1.1.198"/>
    </reaction>
</comment>
<comment type="subcellular location">
    <subcellularLocation>
        <location evidence="1">Cytoplasm</location>
    </subcellularLocation>
</comment>
<comment type="similarity">
    <text evidence="1">Belongs to the methyltransferase superfamily. RsmI family.</text>
</comment>